<accession>B9DYC3</accession>
<sequence length="132" mass="14772">MVMTDPIADLLTRIRNANVVRHEVVEVPSSTIKKAVLNIMLQEGYIKNLEEYADGSVNMIRLSMKYGKNKERVITGLKRISKPGLRVYCRKEEIPKVLNGLGVAIISTSKGIVTDREARKLGVGGEVLCYIW</sequence>
<keyword id="KW-0687">Ribonucleoprotein</keyword>
<keyword id="KW-0689">Ribosomal protein</keyword>
<keyword id="KW-0694">RNA-binding</keyword>
<keyword id="KW-0699">rRNA-binding</keyword>
<evidence type="ECO:0000255" key="1">
    <source>
        <dbReference type="HAMAP-Rule" id="MF_01302"/>
    </source>
</evidence>
<evidence type="ECO:0000305" key="2"/>
<reference key="1">
    <citation type="submission" date="2005-09" db="EMBL/GenBank/DDBJ databases">
        <title>Complete genome sequence of Clostridium kluyveri and comparative genomics of Clostridia species.</title>
        <authorList>
            <person name="Inui M."/>
            <person name="Nonaka H."/>
            <person name="Shinoda Y."/>
            <person name="Ikenaga Y."/>
            <person name="Abe M."/>
            <person name="Naito K."/>
            <person name="Vertes A.A."/>
            <person name="Yukawa H."/>
        </authorList>
    </citation>
    <scope>NUCLEOTIDE SEQUENCE [LARGE SCALE GENOMIC DNA]</scope>
    <source>
        <strain>NBRC 12016</strain>
    </source>
</reference>
<comment type="function">
    <text evidence="1">One of the primary rRNA binding proteins, it binds directly to 16S rRNA central domain where it helps coordinate assembly of the platform of the 30S subunit.</text>
</comment>
<comment type="subunit">
    <text evidence="1">Part of the 30S ribosomal subunit. Contacts proteins S5 and S12.</text>
</comment>
<comment type="similarity">
    <text evidence="1">Belongs to the universal ribosomal protein uS8 family.</text>
</comment>
<feature type="chain" id="PRO_1000165322" description="Small ribosomal subunit protein uS8">
    <location>
        <begin position="1"/>
        <end position="132"/>
    </location>
</feature>
<proteinExistence type="inferred from homology"/>
<dbReference type="EMBL" id="AP009049">
    <property type="protein sequence ID" value="BAH05248.1"/>
    <property type="molecule type" value="Genomic_DNA"/>
</dbReference>
<dbReference type="RefSeq" id="WP_011988817.1">
    <property type="nucleotide sequence ID" value="NC_011837.1"/>
</dbReference>
<dbReference type="SMR" id="B9DYC3"/>
<dbReference type="KEGG" id="ckr:CKR_0197"/>
<dbReference type="HOGENOM" id="CLU_098428_0_2_9"/>
<dbReference type="Proteomes" id="UP000007969">
    <property type="component" value="Chromosome"/>
</dbReference>
<dbReference type="GO" id="GO:1990904">
    <property type="term" value="C:ribonucleoprotein complex"/>
    <property type="evidence" value="ECO:0007669"/>
    <property type="project" value="UniProtKB-KW"/>
</dbReference>
<dbReference type="GO" id="GO:0005840">
    <property type="term" value="C:ribosome"/>
    <property type="evidence" value="ECO:0007669"/>
    <property type="project" value="UniProtKB-KW"/>
</dbReference>
<dbReference type="GO" id="GO:0019843">
    <property type="term" value="F:rRNA binding"/>
    <property type="evidence" value="ECO:0007669"/>
    <property type="project" value="UniProtKB-UniRule"/>
</dbReference>
<dbReference type="GO" id="GO:0003735">
    <property type="term" value="F:structural constituent of ribosome"/>
    <property type="evidence" value="ECO:0007669"/>
    <property type="project" value="InterPro"/>
</dbReference>
<dbReference type="GO" id="GO:0006412">
    <property type="term" value="P:translation"/>
    <property type="evidence" value="ECO:0007669"/>
    <property type="project" value="UniProtKB-UniRule"/>
</dbReference>
<dbReference type="FunFam" id="3.30.1370.30:FF:000002">
    <property type="entry name" value="30S ribosomal protein S8"/>
    <property type="match status" value="1"/>
</dbReference>
<dbReference type="FunFam" id="3.30.1490.10:FF:000001">
    <property type="entry name" value="30S ribosomal protein S8"/>
    <property type="match status" value="1"/>
</dbReference>
<dbReference type="Gene3D" id="3.30.1370.30">
    <property type="match status" value="1"/>
</dbReference>
<dbReference type="Gene3D" id="3.30.1490.10">
    <property type="match status" value="1"/>
</dbReference>
<dbReference type="HAMAP" id="MF_01302_B">
    <property type="entry name" value="Ribosomal_uS8_B"/>
    <property type="match status" value="1"/>
</dbReference>
<dbReference type="InterPro" id="IPR000630">
    <property type="entry name" value="Ribosomal_uS8"/>
</dbReference>
<dbReference type="InterPro" id="IPR047863">
    <property type="entry name" value="Ribosomal_uS8_CS"/>
</dbReference>
<dbReference type="InterPro" id="IPR035987">
    <property type="entry name" value="Ribosomal_uS8_sf"/>
</dbReference>
<dbReference type="NCBIfam" id="NF001109">
    <property type="entry name" value="PRK00136.1"/>
    <property type="match status" value="1"/>
</dbReference>
<dbReference type="PANTHER" id="PTHR11758">
    <property type="entry name" value="40S RIBOSOMAL PROTEIN S15A"/>
    <property type="match status" value="1"/>
</dbReference>
<dbReference type="Pfam" id="PF00410">
    <property type="entry name" value="Ribosomal_S8"/>
    <property type="match status" value="1"/>
</dbReference>
<dbReference type="SUPFAM" id="SSF56047">
    <property type="entry name" value="Ribosomal protein S8"/>
    <property type="match status" value="1"/>
</dbReference>
<dbReference type="PROSITE" id="PS00053">
    <property type="entry name" value="RIBOSOMAL_S8"/>
    <property type="match status" value="1"/>
</dbReference>
<organism>
    <name type="scientific">Clostridium kluyveri (strain NBRC 12016)</name>
    <dbReference type="NCBI Taxonomy" id="583346"/>
    <lineage>
        <taxon>Bacteria</taxon>
        <taxon>Bacillati</taxon>
        <taxon>Bacillota</taxon>
        <taxon>Clostridia</taxon>
        <taxon>Eubacteriales</taxon>
        <taxon>Clostridiaceae</taxon>
        <taxon>Clostridium</taxon>
    </lineage>
</organism>
<protein>
    <recommendedName>
        <fullName evidence="1">Small ribosomal subunit protein uS8</fullName>
    </recommendedName>
    <alternativeName>
        <fullName evidence="2">30S ribosomal protein S8</fullName>
    </alternativeName>
</protein>
<name>RS8_CLOK1</name>
<gene>
    <name evidence="1" type="primary">rpsH</name>
    <name type="ordered locus">CKR_0197</name>
</gene>